<proteinExistence type="evidence at protein level"/>
<evidence type="ECO:0000255" key="1"/>
<evidence type="ECO:0000269" key="2">
    <source>
    </source>
</evidence>
<evidence type="ECO:0000269" key="3">
    <source>
    </source>
</evidence>
<evidence type="ECO:0000303" key="4">
    <source>
    </source>
</evidence>
<evidence type="ECO:0000303" key="5">
    <source>
    </source>
</evidence>
<evidence type="ECO:0000305" key="6"/>
<evidence type="ECO:0000305" key="7">
    <source>
    </source>
</evidence>
<evidence type="ECO:0000312" key="8">
    <source>
        <dbReference type="EMBL" id="ACD05828.1"/>
    </source>
</evidence>
<evidence type="ECO:0000312" key="9">
    <source>
        <dbReference type="Proteomes" id="UP000001031"/>
    </source>
</evidence>
<evidence type="ECO:0007744" key="10">
    <source>
        <dbReference type="PDB" id="6JE8"/>
    </source>
</evidence>
<evidence type="ECO:0007744" key="11">
    <source>
        <dbReference type="PDB" id="6JEA"/>
    </source>
</evidence>
<evidence type="ECO:0007744" key="12">
    <source>
        <dbReference type="PDB" id="6JEB"/>
    </source>
</evidence>
<evidence type="ECO:0007829" key="13">
    <source>
        <dbReference type="PDB" id="6JEB"/>
    </source>
</evidence>
<dbReference type="EC" id="3.2.1.52" evidence="2 3"/>
<dbReference type="EMBL" id="CP001071">
    <property type="protein sequence ID" value="ACD05828.1"/>
    <property type="molecule type" value="Genomic_DNA"/>
</dbReference>
<dbReference type="RefSeq" id="WP_012421042.1">
    <property type="nucleotide sequence ID" value="NC_010655.1"/>
</dbReference>
<dbReference type="PDB" id="6JE8">
    <property type="method" value="X-ray"/>
    <property type="resolution" value="1.80 A"/>
    <property type="chains" value="A=22-490"/>
</dbReference>
<dbReference type="PDB" id="6JEA">
    <property type="method" value="X-ray"/>
    <property type="resolution" value="2.27 A"/>
    <property type="chains" value="A=22-490"/>
</dbReference>
<dbReference type="PDB" id="6JEB">
    <property type="method" value="X-ray"/>
    <property type="resolution" value="1.50 A"/>
    <property type="chains" value="A=22-490"/>
</dbReference>
<dbReference type="PDBsum" id="6JE8"/>
<dbReference type="PDBsum" id="6JEA"/>
<dbReference type="PDBsum" id="6JEB"/>
<dbReference type="SMR" id="B2UP57"/>
<dbReference type="STRING" id="349741.Amuc_2018"/>
<dbReference type="CAZy" id="GH20">
    <property type="family name" value="Glycoside Hydrolase Family 20"/>
</dbReference>
<dbReference type="PaxDb" id="349741-Amuc_2018"/>
<dbReference type="KEGG" id="amu:Amuc_2018"/>
<dbReference type="eggNOG" id="COG3525">
    <property type="taxonomic scope" value="Bacteria"/>
</dbReference>
<dbReference type="HOGENOM" id="CLU_007082_5_1_0"/>
<dbReference type="OrthoDB" id="9770248at2"/>
<dbReference type="BioCyc" id="AMUC349741:G1GBX-2149-MONOMER"/>
<dbReference type="Proteomes" id="UP000001031">
    <property type="component" value="Chromosome"/>
</dbReference>
<dbReference type="GO" id="GO:0016020">
    <property type="term" value="C:membrane"/>
    <property type="evidence" value="ECO:0007669"/>
    <property type="project" value="TreeGrafter"/>
</dbReference>
<dbReference type="GO" id="GO:0032428">
    <property type="term" value="F:beta-N-acetylgalactosaminidase activity"/>
    <property type="evidence" value="ECO:0000314"/>
    <property type="project" value="UniProtKB"/>
</dbReference>
<dbReference type="GO" id="GO:0016231">
    <property type="term" value="F:beta-N-acetylglucosaminidase activity"/>
    <property type="evidence" value="ECO:0000314"/>
    <property type="project" value="UniProtKB"/>
</dbReference>
<dbReference type="GO" id="GO:0046872">
    <property type="term" value="F:metal ion binding"/>
    <property type="evidence" value="ECO:0007669"/>
    <property type="project" value="UniProtKB-KW"/>
</dbReference>
<dbReference type="GO" id="GO:0052781">
    <property type="term" value="P:chitobiose catabolic process"/>
    <property type="evidence" value="ECO:0000314"/>
    <property type="project" value="UniProtKB"/>
</dbReference>
<dbReference type="GO" id="GO:0030203">
    <property type="term" value="P:glycosaminoglycan metabolic process"/>
    <property type="evidence" value="ECO:0007669"/>
    <property type="project" value="TreeGrafter"/>
</dbReference>
<dbReference type="GO" id="GO:0000272">
    <property type="term" value="P:polysaccharide catabolic process"/>
    <property type="evidence" value="ECO:0000314"/>
    <property type="project" value="UniProtKB"/>
</dbReference>
<dbReference type="CDD" id="cd06563">
    <property type="entry name" value="GH20_chitobiase-like"/>
    <property type="match status" value="1"/>
</dbReference>
<dbReference type="Gene3D" id="3.30.379.10">
    <property type="entry name" value="Chitobiase/beta-hexosaminidase domain 2-like"/>
    <property type="match status" value="1"/>
</dbReference>
<dbReference type="Gene3D" id="3.20.20.80">
    <property type="entry name" value="Glycosidases"/>
    <property type="match status" value="1"/>
</dbReference>
<dbReference type="InterPro" id="IPR025705">
    <property type="entry name" value="Beta_hexosaminidase_sua/sub"/>
</dbReference>
<dbReference type="InterPro" id="IPR015883">
    <property type="entry name" value="Glyco_hydro_20_cat"/>
</dbReference>
<dbReference type="InterPro" id="IPR017853">
    <property type="entry name" value="Glycoside_hydrolase_SF"/>
</dbReference>
<dbReference type="InterPro" id="IPR029018">
    <property type="entry name" value="Hex-like_dom2"/>
</dbReference>
<dbReference type="InterPro" id="IPR015882">
    <property type="entry name" value="HEX_bac_N"/>
</dbReference>
<dbReference type="PANTHER" id="PTHR22600">
    <property type="entry name" value="BETA-HEXOSAMINIDASE"/>
    <property type="match status" value="1"/>
</dbReference>
<dbReference type="PANTHER" id="PTHR22600:SF57">
    <property type="entry name" value="BETA-N-ACETYLHEXOSAMINIDASE"/>
    <property type="match status" value="1"/>
</dbReference>
<dbReference type="Pfam" id="PF00728">
    <property type="entry name" value="Glyco_hydro_20"/>
    <property type="match status" value="1"/>
</dbReference>
<dbReference type="Pfam" id="PF02838">
    <property type="entry name" value="Glyco_hydro_20b"/>
    <property type="match status" value="1"/>
</dbReference>
<dbReference type="PIRSF" id="PIRSF001093">
    <property type="entry name" value="B-hxosamndse_ab_euk"/>
    <property type="match status" value="1"/>
</dbReference>
<dbReference type="PRINTS" id="PR00738">
    <property type="entry name" value="GLHYDRLASE20"/>
</dbReference>
<dbReference type="SUPFAM" id="SSF51445">
    <property type="entry name" value="(Trans)glycosidases"/>
    <property type="match status" value="1"/>
</dbReference>
<dbReference type="SUPFAM" id="SSF55545">
    <property type="entry name" value="beta-N-acetylhexosaminidase-like domain"/>
    <property type="match status" value="1"/>
</dbReference>
<keyword id="KW-0002">3D-structure</keyword>
<keyword id="KW-0119">Carbohydrate metabolism</keyword>
<keyword id="KW-0326">Glycosidase</keyword>
<keyword id="KW-0378">Hydrolase</keyword>
<keyword id="KW-0479">Metal-binding</keyword>
<keyword id="KW-0624">Polysaccharide degradation</keyword>
<keyword id="KW-1185">Reference proteome</keyword>
<keyword id="KW-0732">Signal</keyword>
<keyword id="KW-0862">Zinc</keyword>
<organism>
    <name type="scientific">Akkermansia muciniphila (strain ATCC BAA-835 / DSM 22959 / JCM 33894 / BCRC 81048 / CCUG 64013 / CIP 107961 / Muc)</name>
    <dbReference type="NCBI Taxonomy" id="349741"/>
    <lineage>
        <taxon>Bacteria</taxon>
        <taxon>Pseudomonadati</taxon>
        <taxon>Verrucomicrobiota</taxon>
        <taxon>Verrucomicrobiia</taxon>
        <taxon>Verrucomicrobiales</taxon>
        <taxon>Akkermansiaceae</taxon>
        <taxon>Akkermansia</taxon>
    </lineage>
</organism>
<gene>
    <name evidence="8" type="ordered locus">Amuc_2018</name>
</gene>
<comment type="function">
    <text evidence="2 3 6">Hydrolyzes terminal GlcNAc residues from terminally unbranched N-glycans and from chitobiose. Hydrolyzes beta-1,6-linked N-acetylglucosamine and beta-1,4-linked N-acetylgalactosamine from pNP-alpha-GalNAc[beta1,3Gal]beta1,6GlcNAc and pNP-beta-GlcNAc-beta1,4-GalNAc substrates, respectively, as well as beta-1,2-linked N-acetylglucosamine units from the non-reducing end of N-glycans. Hydrolyzes GlcNAc residues linked to alpha1,3- or alpha1,6-mannose branch, but has low activity on substrates with more than one GlcNAc residue on one of the mannose branches. Releases terminal GlcNAc moieties from the N-glycopeptide Gly-Glu-Asn-(GlcNAc2Man3GlcNAc2)-Arg with high efficiency. Has moderate hydrolytic activity on the chitobiose moiety of N-glycopeptide substrate Gly-Glu-Asn-(GlcNAc2)-Arg. Does not hydrolyze GlcNAc residues from N-glycan structures bearing a bisecting GlcNAc moiety (beta1,4-linked GlcNAc to the beta1,4-linked core mannose) (PubMed:29304441). Potentially capable of cleaving the specific glycoside linkages in the process of mucin degradation in human intestinal tract (Probable). Hydrolyzes synthetic substrate pNP-beta-GlcNAc with high activity and pNP-beta-GalNAc to a lesser extent (PubMed:29304441, PubMed:30846208). Does not hydrolyze pNP-beta-glucose, pNP-beta-galactose, pNP-alpha-glucose, pNP-alpha-galactose, pNP-alpha-GlcNAc or pNP-alpha-fucose (PubMed:29304441).</text>
</comment>
<comment type="catalytic activity">
    <reaction evidence="2 3">
        <text>Hydrolysis of terminal non-reducing N-acetyl-D-hexosamine residues in N-acetyl-beta-D-hexosaminides.</text>
        <dbReference type="EC" id="3.2.1.52"/>
    </reaction>
</comment>
<comment type="activity regulation">
    <text evidence="2">Significantly inhibited by the addition of sodium dodecyl sulfate (SDS), but not by EDTA, urea, 2-mercaptoethanol or Triton X-100. Strongly inhibited by Cu2(+) ions, in case of which the activity is decreased by 70%. No significant inhibition with Al(3+), Fe(3+), Ca(2+), Cd(2+), Mg(2+), Mn(2+), Ni(2+) and Zn(2+) ions. Strongly inhibited by PugNAc (O-(2-acetamido-2-deoxy-D-glucopyranosylideneamino) N-phenylcarbamate) in the sub-micromolar concentration range. PugNAc at a concentration of 0.5 mM decreases the activity by 50% and the addition of 1 mM PugNAc fully inhibits the enzyme. No significant reduction in the activity by alkylation using N-ethylmaleimide or 2-iodoacetamide.</text>
</comment>
<comment type="biophysicochemical properties">
    <kinetics>
        <KM evidence="3">0.031 mM for pNP-beta-GlcNAc (at pH 7.0 and 37 degrees Celsius)</KM>
        <KM evidence="2">0.52 mM for pNP-beta-GlcNAc (at pH 5.0 and 37 degrees Celsius)</KM>
        <KM evidence="2">0.11 mM for pNP-beta-GalNAc (at pH 5.0 and 37 degrees Celsius)</KM>
        <Vmax evidence="3">79.99 umol/min/mg enzyme with pNP-beta-GlcNAc as substrate (at pH 7.0 and 37 degrees Celsius)</Vmax>
        <Vmax evidence="2">44.0 umol/min/mg enzyme with pNP-beta-GlcNAc as substrate (at pH 5.0 and 37 degrees Celsius)</Vmax>
        <text evidence="3">kcat is 1.01 sec(-1) and kcat/KM is 34.34 mM(-1)sec(-1) with pNP-beta-GlcNAc as substrate.</text>
    </kinetics>
    <phDependence>
        <text evidence="2">Optimum pH is 5.0. The activity drops sharply below pH 4.5 and above pH 5.5.</text>
    </phDependence>
    <temperatureDependence>
        <text evidence="2">Optimum temperature is 37 degrees Celsius. Retains more than 90% of activity after 96 hours of incubation at 37 degrees Celsius and after 12 hours of incubation at 42 degrees Celsius.</text>
    </temperatureDependence>
</comment>
<comment type="similarity">
    <text evidence="6">Belongs to the glycosyl hydrolase 20 family.</text>
</comment>
<sequence>MARPLPILGGILLSFSPPAEATAQYSIIPEPSRTELRQETAKTLQLLSDQEVPTLETDAYRLTVTPQGAHLASGGREGRIYGLATLRQLRDQLAGQPEGIPCGVITDKPRYPWRGLMVDPARHFIPAADLKKFVDMMAYYKFNRLHLHLTDNQGWRLPVPGYPKLKSVASRREESFGDGIPHEGMYTKQELKELVAYCAARGIDVIPEIDMPGHNQALHAAYPEFFCFPKPDMNVRTTAGNSKELVCPQKPEVWKFYASVFNELKDIFPSGIVHLGGDEAPTELWEKCPLCREARTRAAMKDEQEQMKAFFAKTAALLAKNGQTPQFWYEGNAGIYHPGETVYAWRQGQALQSIEKTKKAGLNLIMASSEYCYLDFPQIQGQRNWGWMKTTTLQKCYDLDPAFGKPEKEAGHIRGVHAPVWAERLPDLNHLLYRAYPRACAIAEAGWSPMGVRSWENFRRKLADHRQFILKRFNYDMERTQGNEPAFRWENNK</sequence>
<feature type="signal peptide" evidence="1">
    <location>
        <begin position="1"/>
        <end position="21"/>
    </location>
</feature>
<feature type="chain" id="PRO_0000452893" description="Beta-hexosaminidase Amuc_2018" evidence="1">
    <location>
        <begin position="22"/>
        <end position="493"/>
    </location>
</feature>
<feature type="active site" description="Charge relay system" evidence="7 10 11 12">
    <location>
        <position position="151"/>
    </location>
</feature>
<feature type="active site" description="Charge relay system" evidence="7 10 11 12">
    <location>
        <position position="214"/>
    </location>
</feature>
<feature type="active site" description="Charge relay system" evidence="3 12">
    <location>
        <position position="279"/>
    </location>
</feature>
<feature type="binding site" evidence="3 11">
    <location>
        <position position="122"/>
    </location>
    <ligand>
        <name>substrate</name>
    </ligand>
</feature>
<feature type="binding site" evidence="3 10 11 12">
    <location>
        <position position="227"/>
    </location>
    <ligand>
        <name>Zn(2+)</name>
        <dbReference type="ChEBI" id="CHEBI:29105"/>
    </ligand>
</feature>
<feature type="binding site" evidence="3 10 11 12">
    <location>
        <position position="247"/>
    </location>
    <ligand>
        <name>Zn(2+)</name>
        <dbReference type="ChEBI" id="CHEBI:29105"/>
    </ligand>
</feature>
<feature type="binding site" evidence="3 11">
    <location>
        <position position="278"/>
    </location>
    <ligand>
        <name>substrate</name>
    </ligand>
</feature>
<feature type="binding site" evidence="3 10 11 12">
    <location>
        <position position="288"/>
    </location>
    <ligand>
        <name>Zn(2+)</name>
        <dbReference type="ChEBI" id="CHEBI:29105"/>
    </ligand>
</feature>
<feature type="binding site" evidence="3 10 11 12">
    <location>
        <position position="291"/>
    </location>
    <ligand>
        <name>Zn(2+)</name>
        <dbReference type="ChEBI" id="CHEBI:29105"/>
    </ligand>
</feature>
<feature type="binding site" evidence="3 11">
    <location>
        <position position="345"/>
    </location>
    <ligand>
        <name>substrate</name>
    </ligand>
</feature>
<feature type="binding site" evidence="3 11">
    <location>
        <begin position="373"/>
        <end position="375"/>
    </location>
    <ligand>
        <name>substrate</name>
    </ligand>
</feature>
<feature type="binding site" evidence="3 11">
    <location>
        <begin position="421"/>
        <end position="423"/>
    </location>
    <ligand>
        <name>substrate</name>
    </ligand>
</feature>
<feature type="mutagenesis site" description="No significant change in KM value, but 37-fold and 2600-fold decrease in specific activity and kcat/KM value compared to that of wild-type, respectively." evidence="3">
    <original>D</original>
    <variation>A</variation>
    <location>
        <position position="278"/>
    </location>
</feature>
<feature type="mutagenesis site" description="No significant change in KM value, but 8.7-fold and 3500-fold decrease in specific activity and kcat/KM value compared to that of wild-type, respectively." evidence="3">
    <original>E</original>
    <variation>A</variation>
    <location>
        <position position="279"/>
    </location>
</feature>
<feature type="mutagenesis site" description="No significant change in KM value, but 6.3-fold and 1226-fold decrease in specific activity and kcat/KM value compared to that of wild-type, respectively." evidence="3">
    <original>Y</original>
    <variation>F</variation>
    <location>
        <position position="373"/>
    </location>
</feature>
<feature type="strand" evidence="13">
    <location>
        <begin position="32"/>
        <end position="42"/>
    </location>
</feature>
<feature type="strand" evidence="13">
    <location>
        <begin position="46"/>
        <end position="51"/>
    </location>
</feature>
<feature type="strand" evidence="13">
    <location>
        <begin position="60"/>
        <end position="65"/>
    </location>
</feature>
<feature type="strand" evidence="13">
    <location>
        <begin position="68"/>
        <end position="75"/>
    </location>
</feature>
<feature type="helix" evidence="13">
    <location>
        <begin position="76"/>
        <end position="94"/>
    </location>
</feature>
<feature type="strand" evidence="13">
    <location>
        <begin position="100"/>
        <end position="107"/>
    </location>
</feature>
<feature type="strand" evidence="13">
    <location>
        <begin position="112"/>
        <end position="118"/>
    </location>
</feature>
<feature type="turn" evidence="13">
    <location>
        <begin position="120"/>
        <end position="122"/>
    </location>
</feature>
<feature type="helix" evidence="13">
    <location>
        <begin position="127"/>
        <end position="139"/>
    </location>
</feature>
<feature type="strand" evidence="13">
    <location>
        <begin position="144"/>
        <end position="148"/>
    </location>
</feature>
<feature type="helix" evidence="13">
    <location>
        <begin position="164"/>
        <end position="167"/>
    </location>
</feature>
<feature type="turn" evidence="13">
    <location>
        <begin position="168"/>
        <end position="170"/>
    </location>
</feature>
<feature type="strand" evidence="13">
    <location>
        <begin position="171"/>
        <end position="173"/>
    </location>
</feature>
<feature type="helix" evidence="13">
    <location>
        <begin position="188"/>
        <end position="199"/>
    </location>
</feature>
<feature type="turn" evidence="13">
    <location>
        <begin position="200"/>
        <end position="202"/>
    </location>
</feature>
<feature type="strand" evidence="13">
    <location>
        <begin position="204"/>
        <end position="208"/>
    </location>
</feature>
<feature type="strand" evidence="13">
    <location>
        <begin position="212"/>
        <end position="214"/>
    </location>
</feature>
<feature type="helix" evidence="13">
    <location>
        <begin position="216"/>
        <end position="221"/>
    </location>
</feature>
<feature type="helix" evidence="13">
    <location>
        <begin position="223"/>
        <end position="225"/>
    </location>
</feature>
<feature type="strand" evidence="13">
    <location>
        <begin position="226"/>
        <end position="228"/>
    </location>
</feature>
<feature type="helix" evidence="13">
    <location>
        <begin position="251"/>
        <end position="267"/>
    </location>
</feature>
<feature type="strand" evidence="13">
    <location>
        <begin position="272"/>
        <end position="274"/>
    </location>
</feature>
<feature type="helix" evidence="13">
    <location>
        <begin position="283"/>
        <end position="287"/>
    </location>
</feature>
<feature type="helix" evidence="13">
    <location>
        <begin position="289"/>
        <end position="298"/>
    </location>
</feature>
<feature type="helix" evidence="13">
    <location>
        <begin position="303"/>
        <end position="320"/>
    </location>
</feature>
<feature type="strand" evidence="13">
    <location>
        <begin position="324"/>
        <end position="328"/>
    </location>
</feature>
<feature type="helix" evidence="13">
    <location>
        <begin position="333"/>
        <end position="335"/>
    </location>
</feature>
<feature type="strand" evidence="13">
    <location>
        <begin position="341"/>
        <end position="344"/>
    </location>
</feature>
<feature type="helix" evidence="13">
    <location>
        <begin position="350"/>
        <end position="360"/>
    </location>
</feature>
<feature type="strand" evidence="13">
    <location>
        <begin position="363"/>
        <end position="366"/>
    </location>
</feature>
<feature type="turn" evidence="13">
    <location>
        <begin position="369"/>
        <end position="371"/>
    </location>
</feature>
<feature type="turn" evidence="13">
    <location>
        <begin position="385"/>
        <end position="387"/>
    </location>
</feature>
<feature type="helix" evidence="13">
    <location>
        <begin position="393"/>
        <end position="397"/>
    </location>
</feature>
<feature type="turn" evidence="13">
    <location>
        <begin position="401"/>
        <end position="404"/>
    </location>
</feature>
<feature type="helix" evidence="13">
    <location>
        <begin position="407"/>
        <end position="410"/>
    </location>
</feature>
<feature type="strand" evidence="13">
    <location>
        <begin position="413"/>
        <end position="420"/>
    </location>
</feature>
<feature type="helix" evidence="13">
    <location>
        <begin position="428"/>
        <end position="435"/>
    </location>
</feature>
<feature type="helix" evidence="13">
    <location>
        <begin position="438"/>
        <end position="447"/>
    </location>
</feature>
<feature type="helix" evidence="13">
    <location>
        <begin position="450"/>
        <end position="452"/>
    </location>
</feature>
<feature type="helix" evidence="13">
    <location>
        <begin position="455"/>
        <end position="473"/>
    </location>
</feature>
<feature type="helix" evidence="13">
    <location>
        <begin position="481"/>
        <end position="483"/>
    </location>
</feature>
<protein>
    <recommendedName>
        <fullName evidence="6">Beta-hexosaminidase Amuc_2018</fullName>
        <ecNumber evidence="2 3">3.2.1.52</ecNumber>
    </recommendedName>
    <alternativeName>
        <fullName evidence="4 5">Beta-N-acetylhexosaminidase Am2301</fullName>
    </alternativeName>
</protein>
<accession>B2UP57</accession>
<name>H2018_AKKM8</name>
<reference evidence="9" key="1">
    <citation type="journal article" date="2011" name="PLoS ONE">
        <title>The genome of Akkermansia muciniphila, a dedicated intestinal mucin degrader, and its use in exploring intestinal metagenomes.</title>
        <authorList>
            <person name="van Passel M.W."/>
            <person name="Kant R."/>
            <person name="Zoetendal E.G."/>
            <person name="Plugge C.M."/>
            <person name="Derrien M."/>
            <person name="Malfatti S.A."/>
            <person name="Chain P.S."/>
            <person name="Woyke T."/>
            <person name="Palva A."/>
            <person name="de Vos W.M."/>
            <person name="Smidt H."/>
        </authorList>
    </citation>
    <scope>NUCLEOTIDE SEQUENCE [LARGE SCALE GENOMIC DNA]</scope>
    <source>
        <strain>ATCC BAA-835 / DSM 22959 / JCM 33894 / BCRC 81048 / CCUG 64013 / CIP 107961 / Muc</strain>
    </source>
</reference>
<reference key="2">
    <citation type="journal article" date="2018" name="Carbohydr. Res.">
        <title>Cloning, purification and biochemical characterization of two beta-N-acetylhexosaminidases from the mucin-degrading gut bacterium Akkermansia muciniphila.</title>
        <authorList>
            <person name="Wang M."/>
            <person name="Zhang X.Y."/>
            <person name="Guo R.R."/>
            <person name="Cai Z.P."/>
            <person name="Hu X.C."/>
            <person name="Chen H."/>
            <person name="Wei S."/>
            <person name="Voglmeir J."/>
            <person name="Liu L."/>
        </authorList>
    </citation>
    <scope>FUNCTION</scope>
    <scope>CATALYTIC ACTIVITY</scope>
    <scope>ACTIVITY REGULATION</scope>
    <scope>BIOPHYSICOCHEMICAL PROPERTIES</scope>
    <scope>SUBSTRATE SPECIFICITY</scope>
    <source>
        <strain evidence="4">ATCC BAA-835 / DSM 22959 / JCM 33894 / BCRC 81048 / CCUG 64013 / CIP 107961 / Muc</strain>
    </source>
</reference>
<reference evidence="10 11 12" key="3">
    <citation type="journal article" date="2019" name="Biochem. Biophys. Res. Commun.">
        <title>Crystallographic evidence for substrate-assisted catalysis of beta-N-acetylhexosaminidas from Akkermansia muciniphila.</title>
        <authorList>
            <person name="Chen X."/>
            <person name="Wang J."/>
            <person name="Liu M."/>
            <person name="Yang W."/>
            <person name="Wang Y."/>
            <person name="Tang R."/>
            <person name="Zhang M."/>
        </authorList>
    </citation>
    <scope>X-RAY CRYSTALLOGRAPHY (1.50 ANGSTROMS) OF 22-490 IN COMPLEXES WITH N-ACETYLGLUCOSAMINE AND ZINC</scope>
    <scope>FUNCTION</scope>
    <scope>CATALYTIC ACTIVITY</scope>
    <scope>BIOPHYSICOCHEMICAL PROPERTIES</scope>
    <scope>ACTIVE SITES</scope>
    <scope>MUTAGENESIS OF ASP-278; GLU-279 AND TYR-373</scope>
</reference>